<keyword id="KW-0158">Chromosome</keyword>
<keyword id="KW-0903">Direct protein sequencing</keyword>
<keyword id="KW-0238">DNA-binding</keyword>
<keyword id="KW-0325">Glycoprotein</keyword>
<keyword id="KW-1017">Isopeptide bond</keyword>
<keyword id="KW-0488">Methylation</keyword>
<keyword id="KW-0544">Nucleosome core</keyword>
<keyword id="KW-0539">Nucleus</keyword>
<keyword id="KW-0832">Ubl conjugation</keyword>
<reference key="1">
    <citation type="journal article" date="1996" name="Nature">
        <title>A covalently crosslinked histone.</title>
        <authorList>
            <person name="Shimizu T."/>
            <person name="Hozumi K."/>
            <person name="Horiike S."/>
            <person name="Nunomura K."/>
            <person name="Ikegami S."/>
            <person name="Takao T."/>
            <person name="Shimonishi Y."/>
        </authorList>
    </citation>
    <scope>PROTEIN SEQUENCE OF 2-122</scope>
    <scope>METHYLATION AT PRO-2</scope>
    <scope>CROSS-LINKING TO H4</scope>
</reference>
<dbReference type="PIR" id="S68536">
    <property type="entry name" value="S68536"/>
</dbReference>
<dbReference type="SMR" id="Q7M4G7"/>
<dbReference type="iPTMnet" id="Q7M4G7"/>
<dbReference type="GO" id="GO:0000786">
    <property type="term" value="C:nucleosome"/>
    <property type="evidence" value="ECO:0007669"/>
    <property type="project" value="UniProtKB-KW"/>
</dbReference>
<dbReference type="GO" id="GO:0005634">
    <property type="term" value="C:nucleus"/>
    <property type="evidence" value="ECO:0007669"/>
    <property type="project" value="UniProtKB-SubCell"/>
</dbReference>
<dbReference type="GO" id="GO:0003677">
    <property type="term" value="F:DNA binding"/>
    <property type="evidence" value="ECO:0007669"/>
    <property type="project" value="UniProtKB-KW"/>
</dbReference>
<dbReference type="GO" id="GO:0046982">
    <property type="term" value="F:protein heterodimerization activity"/>
    <property type="evidence" value="ECO:0007669"/>
    <property type="project" value="InterPro"/>
</dbReference>
<dbReference type="GO" id="GO:0044877">
    <property type="term" value="F:protein-containing complex binding"/>
    <property type="evidence" value="ECO:0000250"/>
    <property type="project" value="UniProtKB"/>
</dbReference>
<dbReference type="GO" id="GO:0030527">
    <property type="term" value="F:structural constituent of chromatin"/>
    <property type="evidence" value="ECO:0007669"/>
    <property type="project" value="InterPro"/>
</dbReference>
<dbReference type="CDD" id="cd22910">
    <property type="entry name" value="HFD_H2B"/>
    <property type="match status" value="1"/>
</dbReference>
<dbReference type="FunFam" id="1.10.20.10:FF:000016">
    <property type="entry name" value="Histone H2B"/>
    <property type="match status" value="1"/>
</dbReference>
<dbReference type="Gene3D" id="1.10.20.10">
    <property type="entry name" value="Histone, subunit A"/>
    <property type="match status" value="1"/>
</dbReference>
<dbReference type="InterPro" id="IPR009072">
    <property type="entry name" value="Histone-fold"/>
</dbReference>
<dbReference type="InterPro" id="IPR007125">
    <property type="entry name" value="Histone_H2A/H2B/H3"/>
</dbReference>
<dbReference type="InterPro" id="IPR000558">
    <property type="entry name" value="Histone_H2B"/>
</dbReference>
<dbReference type="InterPro" id="IPR055333">
    <property type="entry name" value="HISTONE_H2B_site"/>
</dbReference>
<dbReference type="PANTHER" id="PTHR23428">
    <property type="entry name" value="HISTONE H2B"/>
    <property type="match status" value="1"/>
</dbReference>
<dbReference type="Pfam" id="PF00125">
    <property type="entry name" value="Histone"/>
    <property type="match status" value="1"/>
</dbReference>
<dbReference type="PRINTS" id="PR00621">
    <property type="entry name" value="HISTONEH2B"/>
</dbReference>
<dbReference type="SMART" id="SM00427">
    <property type="entry name" value="H2B"/>
    <property type="match status" value="1"/>
</dbReference>
<dbReference type="SUPFAM" id="SSF47113">
    <property type="entry name" value="Histone-fold"/>
    <property type="match status" value="1"/>
</dbReference>
<dbReference type="PROSITE" id="PS00357">
    <property type="entry name" value="HISTONE_H2B"/>
    <property type="match status" value="1"/>
</dbReference>
<evidence type="ECO:0000250" key="1"/>
<evidence type="ECO:0000256" key="2">
    <source>
        <dbReference type="SAM" id="MobiDB-lite"/>
    </source>
</evidence>
<evidence type="ECO:0000269" key="3">
    <source>
    </source>
</evidence>
<evidence type="ECO:0000305" key="4"/>
<comment type="function">
    <text>Core component of nucleosome. Nucleosomes wrap and compact DNA into chromatin, limiting DNA accessibility to the cellular machineries which require DNA as a template. Histones thereby play a central role in transcription regulation, DNA repair, DNA replication and chromosomal stability. DNA accessibility is regulated via a complex set of post-translational modifications of histones, also called histone code, and nucleosome remodeling.</text>
</comment>
<comment type="subunit">
    <text>The nucleosome is a histone octamer containing two molecules each of H2A, H2B, H3 and H4 assembled in one H3-H4 heterotetramer and two H2A-H2B heterodimers. The octamer wraps approximately 147 bp of DNA.</text>
</comment>
<comment type="subcellular location">
    <subcellularLocation>
        <location>Nucleus</location>
    </subcellularLocation>
    <subcellularLocation>
        <location>Chromosome</location>
    </subcellularLocation>
</comment>
<comment type="PTM">
    <text evidence="1">Monoubiquitination of Lys-117 gives a specific tag for epigenetic transcriptional activation and is also prerequisite for histone H3 'Lys-4' and 'Lys-79' methylation.</text>
</comment>
<comment type="PTM">
    <text evidence="1">GlcNAcylation at Ser-109 promotes monoubiquitination of Lys-117. It fluctuates in response to extracellular glucose, and associates with transcribed genes (By similarity).</text>
</comment>
<comment type="similarity">
    <text evidence="4">Belongs to the histone H2B family.</text>
</comment>
<protein>
    <recommendedName>
        <fullName>Histone H2B</fullName>
    </recommendedName>
</protein>
<organism>
    <name type="scientific">Patiria pectinifera</name>
    <name type="common">Starfish</name>
    <name type="synonym">Asterina pectinifera</name>
    <dbReference type="NCBI Taxonomy" id="7594"/>
    <lineage>
        <taxon>Eukaryota</taxon>
        <taxon>Metazoa</taxon>
        <taxon>Echinodermata</taxon>
        <taxon>Eleutherozoa</taxon>
        <taxon>Asterozoa</taxon>
        <taxon>Asteroidea</taxon>
        <taxon>Valvatacea</taxon>
        <taxon>Valvatida</taxon>
        <taxon>Asterinidae</taxon>
        <taxon>Patiria</taxon>
    </lineage>
</organism>
<feature type="initiator methionine" description="Removed" evidence="3">
    <location>
        <position position="1"/>
    </location>
</feature>
<feature type="chain" id="PRO_0000071881" description="Histone H2B">
    <location>
        <begin position="2"/>
        <end position="122"/>
    </location>
</feature>
<feature type="region of interest" description="Disordered" evidence="2">
    <location>
        <begin position="1"/>
        <end position="31"/>
    </location>
</feature>
<feature type="modified residue" description="N,N-dimethylproline" evidence="3">
    <location>
        <position position="2"/>
    </location>
</feature>
<feature type="glycosylation site" description="O-linked (GlcNAc) serine" evidence="1">
    <location>
        <position position="109"/>
    </location>
</feature>
<feature type="cross-link" description="Isoglutamyl lysine isopeptide (Gln-Lys) (interchain with K-5 in histone H4)">
    <location>
        <position position="10"/>
    </location>
</feature>
<feature type="cross-link" description="Glycyl lysine isopeptide (Lys-Gly) (interchain with G-Cter in ubiquitin)" evidence="1">
    <location>
        <position position="117"/>
    </location>
</feature>
<sequence>MPPKPSGKGQKKAGKAKGAPSTNKKRKRKRKESYGIYIYKVMKQVHPDTGISSKAMSIMNSFVNDIFERIAAEASRLAHYNKKSTITSREVQTAVRLLLPGELAKHAVSEGTKAVTKYTTSK</sequence>
<accession>Q7M4G7</accession>
<proteinExistence type="evidence at protein level"/>
<name>H2B_PATPE</name>